<evidence type="ECO:0000255" key="1">
    <source>
        <dbReference type="PROSITE-ProRule" id="PRU00805"/>
    </source>
</evidence>
<evidence type="ECO:0000305" key="2"/>
<dbReference type="EC" id="1.14.17.4"/>
<dbReference type="EMBL" id="Y00478">
    <property type="protein sequence ID" value="CAA68538.1"/>
    <property type="molecule type" value="Genomic_DNA"/>
</dbReference>
<dbReference type="PIR" id="S00519">
    <property type="entry name" value="S00519"/>
</dbReference>
<dbReference type="SMR" id="P07920"/>
<dbReference type="STRING" id="4081.P07920"/>
<dbReference type="PaxDb" id="4081-Solyc12g005940.1.1"/>
<dbReference type="eggNOG" id="KOG0143">
    <property type="taxonomic scope" value="Eukaryota"/>
</dbReference>
<dbReference type="InParanoid" id="P07920"/>
<dbReference type="BRENDA" id="1.14.17.4">
    <property type="organism ID" value="3101"/>
</dbReference>
<dbReference type="UniPathway" id="UPA00384">
    <property type="reaction ID" value="UER00563"/>
</dbReference>
<dbReference type="Proteomes" id="UP000004994">
    <property type="component" value="Unplaced"/>
</dbReference>
<dbReference type="ExpressionAtlas" id="P07920">
    <property type="expression patterns" value="baseline and differential"/>
</dbReference>
<dbReference type="GO" id="GO:0009815">
    <property type="term" value="F:1-aminocyclopropane-1-carboxylate oxidase activity"/>
    <property type="evidence" value="ECO:0007669"/>
    <property type="project" value="UniProtKB-EC"/>
</dbReference>
<dbReference type="GO" id="GO:0016706">
    <property type="term" value="F:2-oxoglutarate-dependent dioxygenase activity"/>
    <property type="evidence" value="ECO:0000318"/>
    <property type="project" value="GO_Central"/>
</dbReference>
<dbReference type="GO" id="GO:0031418">
    <property type="term" value="F:L-ascorbic acid binding"/>
    <property type="evidence" value="ECO:0007669"/>
    <property type="project" value="UniProtKB-KW"/>
</dbReference>
<dbReference type="GO" id="GO:0046872">
    <property type="term" value="F:metal ion binding"/>
    <property type="evidence" value="ECO:0007669"/>
    <property type="project" value="UniProtKB-KW"/>
</dbReference>
<dbReference type="GO" id="GO:0009805">
    <property type="term" value="P:coumarin biosynthetic process"/>
    <property type="evidence" value="ECO:0007669"/>
    <property type="project" value="UniProtKB-ARBA"/>
</dbReference>
<dbReference type="GO" id="GO:0009693">
    <property type="term" value="P:ethylene biosynthetic process"/>
    <property type="evidence" value="ECO:0007669"/>
    <property type="project" value="UniProtKB-UniPathway"/>
</dbReference>
<dbReference type="GO" id="GO:0009835">
    <property type="term" value="P:fruit ripening"/>
    <property type="evidence" value="ECO:0007669"/>
    <property type="project" value="UniProtKB-KW"/>
</dbReference>
<dbReference type="GO" id="GO:0002238">
    <property type="term" value="P:response to molecule of fungal origin"/>
    <property type="evidence" value="ECO:0007669"/>
    <property type="project" value="UniProtKB-ARBA"/>
</dbReference>
<dbReference type="FunFam" id="2.60.120.330:FF:000002">
    <property type="entry name" value="1-aminocyclopropane-1-carboxylate oxidase 1"/>
    <property type="match status" value="1"/>
</dbReference>
<dbReference type="Gene3D" id="2.60.120.330">
    <property type="entry name" value="B-lactam Antibiotic, Isopenicillin N Synthase, Chain"/>
    <property type="match status" value="1"/>
</dbReference>
<dbReference type="InterPro" id="IPR026992">
    <property type="entry name" value="DIOX_N"/>
</dbReference>
<dbReference type="InterPro" id="IPR044861">
    <property type="entry name" value="IPNS-like_FE2OG_OXY"/>
</dbReference>
<dbReference type="InterPro" id="IPR027443">
    <property type="entry name" value="IPNS-like_sf"/>
</dbReference>
<dbReference type="InterPro" id="IPR005123">
    <property type="entry name" value="Oxoglu/Fe-dep_dioxygenase_dom"/>
</dbReference>
<dbReference type="InterPro" id="IPR050295">
    <property type="entry name" value="Plant_2OG-oxidoreductases"/>
</dbReference>
<dbReference type="PANTHER" id="PTHR47991">
    <property type="entry name" value="OXOGLUTARATE/IRON-DEPENDENT DIOXYGENASE"/>
    <property type="match status" value="1"/>
</dbReference>
<dbReference type="Pfam" id="PF03171">
    <property type="entry name" value="2OG-FeII_Oxy"/>
    <property type="match status" value="1"/>
</dbReference>
<dbReference type="Pfam" id="PF14226">
    <property type="entry name" value="DIOX_N"/>
    <property type="match status" value="1"/>
</dbReference>
<dbReference type="SUPFAM" id="SSF51197">
    <property type="entry name" value="Clavaminate synthase-like"/>
    <property type="match status" value="1"/>
</dbReference>
<dbReference type="PROSITE" id="PS51471">
    <property type="entry name" value="FE2OG_OXY"/>
    <property type="match status" value="1"/>
</dbReference>
<keyword id="KW-0266">Ethylene biosynthesis</keyword>
<keyword id="KW-0292">Fruit ripening</keyword>
<keyword id="KW-0408">Iron</keyword>
<keyword id="KW-0479">Metal-binding</keyword>
<keyword id="KW-0560">Oxidoreductase</keyword>
<keyword id="KW-1185">Reference proteome</keyword>
<keyword id="KW-0847">Vitamin C</keyword>
<organism>
    <name type="scientific">Solanum lycopersicum</name>
    <name type="common">Tomato</name>
    <name type="synonym">Lycopersicon esculentum</name>
    <dbReference type="NCBI Taxonomy" id="4081"/>
    <lineage>
        <taxon>Eukaryota</taxon>
        <taxon>Viridiplantae</taxon>
        <taxon>Streptophyta</taxon>
        <taxon>Embryophyta</taxon>
        <taxon>Tracheophyta</taxon>
        <taxon>Spermatophyta</taxon>
        <taxon>Magnoliopsida</taxon>
        <taxon>eudicotyledons</taxon>
        <taxon>Gunneridae</taxon>
        <taxon>Pentapetalae</taxon>
        <taxon>asterids</taxon>
        <taxon>lamiids</taxon>
        <taxon>Solanales</taxon>
        <taxon>Solanaceae</taxon>
        <taxon>Solanoideae</taxon>
        <taxon>Solaneae</taxon>
        <taxon>Solanum</taxon>
        <taxon>Solanum subgen. Lycopersicon</taxon>
    </lineage>
</organism>
<sequence>MENFPIINLEKLNGAERVATMEKINDACENWGFFELVNHGIPHEVMDTVEKLTKGHYKKCMEQRFKELVAKKGLEGVEVEVTDMDWESTFFLRHLPSSNISQLPDLDDVYREVMRDFRKRLEKLAEELLDLLCENLGLEKSYLKNTFYGSKGPNFGTKVSNYPPCPKPDLIKGLRAHTDAGGIILLFQDDKVSGLQLLKDGRWIDVPPMRHSIVVNLGDQLEVITNGKYKSVMHRVIAQKDGTRMSLASFYNPGNDALIYPAPALVDKEAEEHNKQVYPKFMFDDYMKLYANLKFQAKEPRFEAMKAMESDPIAIA</sequence>
<comment type="catalytic activity">
    <reaction>
        <text>1-aminocyclopropane-1-carboxylate + L-ascorbate + O2 = ethene + L-dehydroascorbate + hydrogen cyanide + CO2 + 2 H2O</text>
        <dbReference type="Rhea" id="RHEA:23640"/>
        <dbReference type="ChEBI" id="CHEBI:15377"/>
        <dbReference type="ChEBI" id="CHEBI:15379"/>
        <dbReference type="ChEBI" id="CHEBI:16526"/>
        <dbReference type="ChEBI" id="CHEBI:18153"/>
        <dbReference type="ChEBI" id="CHEBI:18407"/>
        <dbReference type="ChEBI" id="CHEBI:38290"/>
        <dbReference type="ChEBI" id="CHEBI:58360"/>
        <dbReference type="ChEBI" id="CHEBI:58539"/>
        <dbReference type="EC" id="1.14.17.4"/>
    </reaction>
</comment>
<comment type="cofactor">
    <cofactor>
        <name>Fe cation</name>
        <dbReference type="ChEBI" id="CHEBI:24875"/>
    </cofactor>
</comment>
<comment type="pathway">
    <text>Alkene biosynthesis; ethylene biosynthesis via S-adenosyl-L-methionine; ethylene from S-adenosyl-L-methionine: step 2/2.</text>
</comment>
<comment type="tissue specificity">
    <text>Leaves.</text>
</comment>
<comment type="induction">
    <text>By wounding.</text>
</comment>
<comment type="similarity">
    <text evidence="2">Belongs to the iron/ascorbate-dependent oxidoreductase family.</text>
</comment>
<reference key="1">
    <citation type="journal article" date="1987" name="Nucleic Acids Res.">
        <title>Nucleotide sequence of an ethylene-related gene from tomato.</title>
        <authorList>
            <person name="Holdsworth M.J."/>
            <person name="Schuch W."/>
            <person name="Grierson D."/>
        </authorList>
    </citation>
    <scope>NUCLEOTIDE SEQUENCE [GENOMIC DNA]</scope>
    <source>
        <strain>cv. Ailsa Craig</strain>
    </source>
</reference>
<gene>
    <name type="primary">ACO2</name>
</gene>
<proteinExistence type="evidence at transcript level"/>
<feature type="chain" id="PRO_0000067262" description="1-aminocyclopropane-1-carboxylate oxidase 2">
    <location>
        <begin position="1"/>
        <end position="316"/>
    </location>
</feature>
<feature type="domain" description="Fe2OG dioxygenase" evidence="1">
    <location>
        <begin position="153"/>
        <end position="253"/>
    </location>
</feature>
<feature type="binding site" evidence="1">
    <location>
        <position position="177"/>
    </location>
    <ligand>
        <name>Fe cation</name>
        <dbReference type="ChEBI" id="CHEBI:24875"/>
    </ligand>
</feature>
<feature type="binding site" evidence="1">
    <location>
        <position position="179"/>
    </location>
    <ligand>
        <name>Fe cation</name>
        <dbReference type="ChEBI" id="CHEBI:24875"/>
    </ligand>
</feature>
<feature type="binding site" evidence="1">
    <location>
        <position position="234"/>
    </location>
    <ligand>
        <name>Fe cation</name>
        <dbReference type="ChEBI" id="CHEBI:24875"/>
    </ligand>
</feature>
<accession>P07920</accession>
<name>ACCO2_SOLLC</name>
<protein>
    <recommendedName>
        <fullName>1-aminocyclopropane-1-carboxylate oxidase 2</fullName>
        <shortName>ACC oxidase 2</shortName>
        <ecNumber>1.14.17.4</ecNumber>
    </recommendedName>
    <alternativeName>
        <fullName>Ethylene-forming enzyme</fullName>
        <shortName>EFE</shortName>
    </alternativeName>
    <alternativeName>
        <fullName>Protein GTOMA</fullName>
    </alternativeName>
</protein>